<accession>Q21178</accession>
<dbReference type="EC" id="3.4.24.-" evidence="2"/>
<dbReference type="EMBL" id="Z74039">
    <property type="protein sequence ID" value="CAA98501.1"/>
    <property type="molecule type" value="Genomic_DNA"/>
</dbReference>
<dbReference type="PIR" id="T23263">
    <property type="entry name" value="T23263"/>
</dbReference>
<dbReference type="RefSeq" id="NP_505892.1">
    <property type="nucleotide sequence ID" value="NM_073491.1"/>
</dbReference>
<dbReference type="SMR" id="Q21178"/>
<dbReference type="FunCoup" id="Q21178">
    <property type="interactions" value="1"/>
</dbReference>
<dbReference type="STRING" id="6239.K03B8.2.1"/>
<dbReference type="MEROPS" id="M12.A31"/>
<dbReference type="GlyCosmos" id="Q21178">
    <property type="glycosylation" value="1 site, No reported glycans"/>
</dbReference>
<dbReference type="PaxDb" id="6239-K03B8.2"/>
<dbReference type="PeptideAtlas" id="Q21178"/>
<dbReference type="EnsemblMetazoa" id="K03B8.2.1">
    <property type="protein sequence ID" value="K03B8.2.1"/>
    <property type="gene ID" value="WBGene00003536"/>
</dbReference>
<dbReference type="GeneID" id="186923"/>
<dbReference type="KEGG" id="cel:CELE_K03B8.2"/>
<dbReference type="UCSC" id="K03B8.2">
    <property type="organism name" value="c. elegans"/>
</dbReference>
<dbReference type="AGR" id="WB:WBGene00003536"/>
<dbReference type="CTD" id="186923"/>
<dbReference type="WormBase" id="K03B8.2">
    <property type="protein sequence ID" value="CE06076"/>
    <property type="gene ID" value="WBGene00003536"/>
    <property type="gene designation" value="nas-17"/>
</dbReference>
<dbReference type="eggNOG" id="KOG3714">
    <property type="taxonomic scope" value="Eukaryota"/>
</dbReference>
<dbReference type="GeneTree" id="ENSGT00970000196148"/>
<dbReference type="HOGENOM" id="CLU_017286_1_1_1"/>
<dbReference type="InParanoid" id="Q21178"/>
<dbReference type="OrthoDB" id="5785852at2759"/>
<dbReference type="PhylomeDB" id="Q21178"/>
<dbReference type="PRO" id="PR:Q21178"/>
<dbReference type="Proteomes" id="UP000001940">
    <property type="component" value="Chromosome V"/>
</dbReference>
<dbReference type="Bgee" id="WBGene00003536">
    <property type="expression patterns" value="Expressed in adult organism and 1 other cell type or tissue"/>
</dbReference>
<dbReference type="GO" id="GO:0005576">
    <property type="term" value="C:extracellular region"/>
    <property type="evidence" value="ECO:0007669"/>
    <property type="project" value="UniProtKB-SubCell"/>
</dbReference>
<dbReference type="GO" id="GO:0004222">
    <property type="term" value="F:metalloendopeptidase activity"/>
    <property type="evidence" value="ECO:0000318"/>
    <property type="project" value="GO_Central"/>
</dbReference>
<dbReference type="GO" id="GO:0008270">
    <property type="term" value="F:zinc ion binding"/>
    <property type="evidence" value="ECO:0007669"/>
    <property type="project" value="InterPro"/>
</dbReference>
<dbReference type="GO" id="GO:0018996">
    <property type="term" value="P:molting cycle, collagen and cuticulin-based cuticle"/>
    <property type="evidence" value="ECO:0007669"/>
    <property type="project" value="InterPro"/>
</dbReference>
<dbReference type="GO" id="GO:0006508">
    <property type="term" value="P:proteolysis"/>
    <property type="evidence" value="ECO:0007669"/>
    <property type="project" value="UniProtKB-KW"/>
</dbReference>
<dbReference type="CDD" id="cd04280">
    <property type="entry name" value="ZnMc_astacin_like"/>
    <property type="match status" value="1"/>
</dbReference>
<dbReference type="FunFam" id="3.40.390.10:FF:000105">
    <property type="entry name" value="Zinc metalloproteinase nas-16"/>
    <property type="match status" value="1"/>
</dbReference>
<dbReference type="Gene3D" id="3.40.390.10">
    <property type="entry name" value="Collagenase (Catalytic Domain)"/>
    <property type="match status" value="1"/>
</dbReference>
<dbReference type="InterPro" id="IPR034035">
    <property type="entry name" value="Astacin-like_dom"/>
</dbReference>
<dbReference type="InterPro" id="IPR024079">
    <property type="entry name" value="MetalloPept_cat_dom_sf"/>
</dbReference>
<dbReference type="InterPro" id="IPR017050">
    <property type="entry name" value="Metallopeptidase_nem"/>
</dbReference>
<dbReference type="InterPro" id="IPR001506">
    <property type="entry name" value="Peptidase_M12A"/>
</dbReference>
<dbReference type="InterPro" id="IPR006026">
    <property type="entry name" value="Peptidase_Metallo"/>
</dbReference>
<dbReference type="PANTHER" id="PTHR10127">
    <property type="entry name" value="DISCOIDIN, CUB, EGF, LAMININ , AND ZINC METALLOPROTEASE DOMAIN CONTAINING"/>
    <property type="match status" value="1"/>
</dbReference>
<dbReference type="PANTHER" id="PTHR10127:SF885">
    <property type="entry name" value="ZINC METALLOPROTEINASE NAS-16-RELATED"/>
    <property type="match status" value="1"/>
</dbReference>
<dbReference type="Pfam" id="PF01400">
    <property type="entry name" value="Astacin"/>
    <property type="match status" value="1"/>
</dbReference>
<dbReference type="PIRSF" id="PIRSF036365">
    <property type="entry name" value="Astacin_nematoda"/>
    <property type="match status" value="1"/>
</dbReference>
<dbReference type="PRINTS" id="PR00480">
    <property type="entry name" value="ASTACIN"/>
</dbReference>
<dbReference type="SMART" id="SM00235">
    <property type="entry name" value="ZnMc"/>
    <property type="match status" value="1"/>
</dbReference>
<dbReference type="SUPFAM" id="SSF55486">
    <property type="entry name" value="Metalloproteases ('zincins'), catalytic domain"/>
    <property type="match status" value="1"/>
</dbReference>
<dbReference type="PROSITE" id="PS51864">
    <property type="entry name" value="ASTACIN"/>
    <property type="match status" value="1"/>
</dbReference>
<dbReference type="PROSITE" id="PS00022">
    <property type="entry name" value="EGF_1"/>
    <property type="match status" value="1"/>
</dbReference>
<dbReference type="PROSITE" id="PS01186">
    <property type="entry name" value="EGF_2"/>
    <property type="match status" value="1"/>
</dbReference>
<dbReference type="PROSITE" id="PS00142">
    <property type="entry name" value="ZINC_PROTEASE"/>
    <property type="match status" value="1"/>
</dbReference>
<sequence length="429" mass="48563">MFLRPSTLLLTLFLALVAGSAIRKDVDEFDSNKGKDGIVDGDIMLTEAQLRILNGTAKRSKRQITKIWKKWPDAKVFYYYENEFTSLKRELMSYAMAHISSNTCVKFQESNSATNRIRFTNTGGCASYIGMNGGEQTLWFGDGCLIFGTAVHEIMHSLGLFHTHSRFDRDNFLSVSYKDVPENMVGNLEKETEQTTYNAVPFEYGSTMLYRYNTFGEGTLVSKNEDYQKTMGLRRVSFYDLVNINVRYSCGCAKSLTCENGGYTNPSNCATCVCPTGFAGTLCNEAPSNTIKLTAESYWKGYWVNFGYSTSIQTTNYYLAYLWITAPADKTIEVKIMDLSGFTCSYGCNYNGVEVKYMGDPRITNPLRCCAQDTEYLNQVISSKQNPTPIVMQQRYGSSKLTIHYRYVDTPLSSNKKSTNGYDNYQYYV</sequence>
<comment type="function">
    <text evidence="2">Metalloprotease.</text>
</comment>
<comment type="cofactor">
    <cofactor evidence="4">
        <name>Zn(2+)</name>
        <dbReference type="ChEBI" id="CHEBI:29105"/>
    </cofactor>
    <text evidence="4">Binds 1 zinc ion per subunit.</text>
</comment>
<comment type="subcellular location">
    <subcellularLocation>
        <location evidence="5">Secreted</location>
    </subcellularLocation>
</comment>
<organism>
    <name type="scientific">Caenorhabditis elegans</name>
    <dbReference type="NCBI Taxonomy" id="6239"/>
    <lineage>
        <taxon>Eukaryota</taxon>
        <taxon>Metazoa</taxon>
        <taxon>Ecdysozoa</taxon>
        <taxon>Nematoda</taxon>
        <taxon>Chromadorea</taxon>
        <taxon>Rhabditida</taxon>
        <taxon>Rhabditina</taxon>
        <taxon>Rhabditomorpha</taxon>
        <taxon>Rhabditoidea</taxon>
        <taxon>Rhabditidae</taxon>
        <taxon>Peloderinae</taxon>
        <taxon>Caenorhabditis</taxon>
    </lineage>
</organism>
<feature type="signal peptide" evidence="3">
    <location>
        <begin position="1"/>
        <end position="21"/>
    </location>
</feature>
<feature type="propeptide" id="PRO_0000442664" evidence="5">
    <location>
        <begin position="22"/>
        <end status="unknown"/>
    </location>
</feature>
<feature type="chain" id="PRO_0000028921" description="Zinc metalloproteinase nas-17">
    <location>
        <begin status="unknown"/>
        <end position="429"/>
    </location>
</feature>
<feature type="domain" description="Peptidase M12A" evidence="4">
    <location>
        <begin position="62"/>
        <end position="251"/>
    </location>
</feature>
<feature type="domain" description="EGF-like">
    <location>
        <begin position="245"/>
        <end position="284"/>
    </location>
</feature>
<feature type="active site" evidence="4">
    <location>
        <position position="153"/>
    </location>
</feature>
<feature type="binding site" evidence="4">
    <location>
        <position position="152"/>
    </location>
    <ligand>
        <name>Zn(2+)</name>
        <dbReference type="ChEBI" id="CHEBI:29105"/>
        <note>catalytic</note>
    </ligand>
</feature>
<feature type="binding site" evidence="4">
    <location>
        <position position="156"/>
    </location>
    <ligand>
        <name>Zn(2+)</name>
        <dbReference type="ChEBI" id="CHEBI:29105"/>
        <note>catalytic</note>
    </ligand>
</feature>
<feature type="binding site" evidence="4">
    <location>
        <position position="162"/>
    </location>
    <ligand>
        <name>Zn(2+)</name>
        <dbReference type="ChEBI" id="CHEBI:29105"/>
        <note>catalytic</note>
    </ligand>
</feature>
<feature type="glycosylation site" description="N-linked (GlcNAc...) asparagine" evidence="3">
    <location>
        <position position="54"/>
    </location>
</feature>
<feature type="disulfide bond" evidence="4">
    <location>
        <begin position="104"/>
        <end position="250"/>
    </location>
</feature>
<feature type="disulfide bond" evidence="4">
    <location>
        <begin position="125"/>
        <end position="144"/>
    </location>
</feature>
<feature type="disulfide bond" evidence="1">
    <location>
        <begin position="252"/>
        <end position="272"/>
    </location>
</feature>
<feature type="disulfide bond" evidence="1">
    <location>
        <begin position="274"/>
        <end position="283"/>
    </location>
</feature>
<gene>
    <name type="primary">nas-17</name>
    <name type="ORF">K03B8.2</name>
</gene>
<reference key="1">
    <citation type="journal article" date="1998" name="Science">
        <title>Genome sequence of the nematode C. elegans: a platform for investigating biology.</title>
        <authorList>
            <consortium name="The C. elegans sequencing consortium"/>
        </authorList>
    </citation>
    <scope>NUCLEOTIDE SEQUENCE [LARGE SCALE GENOMIC DNA]</scope>
    <source>
        <strain>Bristol N2</strain>
    </source>
</reference>
<reference key="2">
    <citation type="journal article" date="2003" name="Eur. J. Biochem.">
        <title>The astacin protein family in Caenorhabditis elegans.</title>
        <authorList>
            <person name="Moehrlen F."/>
            <person name="Hutter H."/>
            <person name="Zwilling R."/>
        </authorList>
    </citation>
    <scope>IDENTIFICATION</scope>
    <scope>NOMENCLATURE</scope>
</reference>
<protein>
    <recommendedName>
        <fullName>Zinc metalloproteinase nas-17</fullName>
        <ecNumber evidence="2">3.4.24.-</ecNumber>
    </recommendedName>
    <alternativeName>
        <fullName>Nematode astacin 17</fullName>
    </alternativeName>
</protein>
<evidence type="ECO:0000250" key="1"/>
<evidence type="ECO:0000250" key="2">
    <source>
        <dbReference type="UniProtKB" id="A8Q2D1"/>
    </source>
</evidence>
<evidence type="ECO:0000255" key="3"/>
<evidence type="ECO:0000255" key="4">
    <source>
        <dbReference type="PROSITE-ProRule" id="PRU01211"/>
    </source>
</evidence>
<evidence type="ECO:0000305" key="5"/>
<keyword id="KW-1015">Disulfide bond</keyword>
<keyword id="KW-0245">EGF-like domain</keyword>
<keyword id="KW-0325">Glycoprotein</keyword>
<keyword id="KW-0378">Hydrolase</keyword>
<keyword id="KW-0479">Metal-binding</keyword>
<keyword id="KW-0482">Metalloprotease</keyword>
<keyword id="KW-0645">Protease</keyword>
<keyword id="KW-1185">Reference proteome</keyword>
<keyword id="KW-0964">Secreted</keyword>
<keyword id="KW-0732">Signal</keyword>
<keyword id="KW-0862">Zinc</keyword>
<keyword id="KW-0865">Zymogen</keyword>
<proteinExistence type="inferred from homology"/>
<name>NAS17_CAEEL</name>